<feature type="chain" id="PRO_1000062520" description="Protein-export protein SecB">
    <location>
        <begin position="1"/>
        <end position="157"/>
    </location>
</feature>
<dbReference type="EMBL" id="CP000447">
    <property type="protein sequence ID" value="ABI73844.1"/>
    <property type="molecule type" value="Genomic_DNA"/>
</dbReference>
<dbReference type="RefSeq" id="WP_011639424.1">
    <property type="nucleotide sequence ID" value="NC_008345.1"/>
</dbReference>
<dbReference type="SMR" id="Q07VX0"/>
<dbReference type="STRING" id="318167.Sfri_4019"/>
<dbReference type="KEGG" id="sfr:Sfri_4019"/>
<dbReference type="eggNOG" id="COG1952">
    <property type="taxonomic scope" value="Bacteria"/>
</dbReference>
<dbReference type="HOGENOM" id="CLU_111574_1_0_6"/>
<dbReference type="OrthoDB" id="9795145at2"/>
<dbReference type="Proteomes" id="UP000000684">
    <property type="component" value="Chromosome"/>
</dbReference>
<dbReference type="GO" id="GO:0005737">
    <property type="term" value="C:cytoplasm"/>
    <property type="evidence" value="ECO:0007669"/>
    <property type="project" value="UniProtKB-SubCell"/>
</dbReference>
<dbReference type="GO" id="GO:0051082">
    <property type="term" value="F:unfolded protein binding"/>
    <property type="evidence" value="ECO:0007669"/>
    <property type="project" value="InterPro"/>
</dbReference>
<dbReference type="GO" id="GO:0006457">
    <property type="term" value="P:protein folding"/>
    <property type="evidence" value="ECO:0007669"/>
    <property type="project" value="UniProtKB-UniRule"/>
</dbReference>
<dbReference type="GO" id="GO:0051262">
    <property type="term" value="P:protein tetramerization"/>
    <property type="evidence" value="ECO:0007669"/>
    <property type="project" value="InterPro"/>
</dbReference>
<dbReference type="GO" id="GO:0015031">
    <property type="term" value="P:protein transport"/>
    <property type="evidence" value="ECO:0007669"/>
    <property type="project" value="UniProtKB-UniRule"/>
</dbReference>
<dbReference type="Gene3D" id="3.10.420.10">
    <property type="entry name" value="SecB-like"/>
    <property type="match status" value="1"/>
</dbReference>
<dbReference type="HAMAP" id="MF_00821">
    <property type="entry name" value="SecB"/>
    <property type="match status" value="1"/>
</dbReference>
<dbReference type="InterPro" id="IPR003708">
    <property type="entry name" value="SecB"/>
</dbReference>
<dbReference type="InterPro" id="IPR035958">
    <property type="entry name" value="SecB-like_sf"/>
</dbReference>
<dbReference type="NCBIfam" id="NF004393">
    <property type="entry name" value="PRK05751.1-4"/>
    <property type="match status" value="1"/>
</dbReference>
<dbReference type="NCBIfam" id="TIGR00809">
    <property type="entry name" value="secB"/>
    <property type="match status" value="1"/>
</dbReference>
<dbReference type="PANTHER" id="PTHR36918">
    <property type="match status" value="1"/>
</dbReference>
<dbReference type="PANTHER" id="PTHR36918:SF1">
    <property type="entry name" value="PROTEIN-EXPORT PROTEIN SECB"/>
    <property type="match status" value="1"/>
</dbReference>
<dbReference type="Pfam" id="PF02556">
    <property type="entry name" value="SecB"/>
    <property type="match status" value="1"/>
</dbReference>
<dbReference type="PRINTS" id="PR01594">
    <property type="entry name" value="SECBCHAPRONE"/>
</dbReference>
<dbReference type="SUPFAM" id="SSF54611">
    <property type="entry name" value="SecB-like"/>
    <property type="match status" value="1"/>
</dbReference>
<keyword id="KW-0143">Chaperone</keyword>
<keyword id="KW-0963">Cytoplasm</keyword>
<keyword id="KW-0653">Protein transport</keyword>
<keyword id="KW-1185">Reference proteome</keyword>
<keyword id="KW-0811">Translocation</keyword>
<keyword id="KW-0813">Transport</keyword>
<proteinExistence type="inferred from homology"/>
<evidence type="ECO:0000255" key="1">
    <source>
        <dbReference type="HAMAP-Rule" id="MF_00821"/>
    </source>
</evidence>
<comment type="function">
    <text evidence="1">One of the proteins required for the normal export of preproteins out of the cell cytoplasm. It is a molecular chaperone that binds to a subset of precursor proteins, maintaining them in a translocation-competent state. It also specifically binds to its receptor SecA.</text>
</comment>
<comment type="subunit">
    <text evidence="1">Homotetramer, a dimer of dimers. One homotetramer interacts with 1 SecA dimer.</text>
</comment>
<comment type="subcellular location">
    <subcellularLocation>
        <location evidence="1">Cytoplasm</location>
    </subcellularLocation>
</comment>
<comment type="similarity">
    <text evidence="1">Belongs to the SecB family.</text>
</comment>
<accession>Q07VX0</accession>
<organism>
    <name type="scientific">Shewanella frigidimarina (strain NCIMB 400)</name>
    <dbReference type="NCBI Taxonomy" id="318167"/>
    <lineage>
        <taxon>Bacteria</taxon>
        <taxon>Pseudomonadati</taxon>
        <taxon>Pseudomonadota</taxon>
        <taxon>Gammaproteobacteria</taxon>
        <taxon>Alteromonadales</taxon>
        <taxon>Shewanellaceae</taxon>
        <taxon>Shewanella</taxon>
    </lineage>
</organism>
<reference key="1">
    <citation type="submission" date="2006-08" db="EMBL/GenBank/DDBJ databases">
        <title>Complete sequence of Shewanella frigidimarina NCIMB 400.</title>
        <authorList>
            <consortium name="US DOE Joint Genome Institute"/>
            <person name="Copeland A."/>
            <person name="Lucas S."/>
            <person name="Lapidus A."/>
            <person name="Barry K."/>
            <person name="Detter J.C."/>
            <person name="Glavina del Rio T."/>
            <person name="Hammon N."/>
            <person name="Israni S."/>
            <person name="Dalin E."/>
            <person name="Tice H."/>
            <person name="Pitluck S."/>
            <person name="Fredrickson J.K."/>
            <person name="Kolker E."/>
            <person name="McCuel L.A."/>
            <person name="DiChristina T."/>
            <person name="Nealson K.H."/>
            <person name="Newman D."/>
            <person name="Tiedje J.M."/>
            <person name="Zhou J."/>
            <person name="Romine M.F."/>
            <person name="Culley D.E."/>
            <person name="Serres M."/>
            <person name="Chertkov O."/>
            <person name="Brettin T."/>
            <person name="Bruce D."/>
            <person name="Han C."/>
            <person name="Tapia R."/>
            <person name="Gilna P."/>
            <person name="Schmutz J."/>
            <person name="Larimer F."/>
            <person name="Land M."/>
            <person name="Hauser L."/>
            <person name="Kyrpides N."/>
            <person name="Mikhailova N."/>
            <person name="Richardson P."/>
        </authorList>
    </citation>
    <scope>NUCLEOTIDE SEQUENCE [LARGE SCALE GENOMIC DNA]</scope>
    <source>
        <strain>NCIMB 400</strain>
    </source>
</reference>
<sequence>MAEVANNEAQAPQFNIQRIYTKDLSFETPNSPAVFQKEWNPEVKLDLDTRSNKLSDDTYEVILSLTVTAKNGEDTAFLCEVQQAGIFSIVGLTEQQLAHSLGAYCPNVLFPYARELVGNLVGRGTFPQLNLAPVNFDALFAQYVQQRQAAATEEATA</sequence>
<protein>
    <recommendedName>
        <fullName evidence="1">Protein-export protein SecB</fullName>
    </recommendedName>
</protein>
<gene>
    <name evidence="1" type="primary">secB</name>
    <name type="ordered locus">Sfri_4019</name>
</gene>
<name>SECB_SHEFN</name>